<accession>A7MH03</accession>
<feature type="chain" id="PRO_1000008424" description="Holo-[acyl-carrier-protein] synthase">
    <location>
        <begin position="1"/>
        <end position="126"/>
    </location>
</feature>
<feature type="binding site" evidence="1">
    <location>
        <position position="9"/>
    </location>
    <ligand>
        <name>Mg(2+)</name>
        <dbReference type="ChEBI" id="CHEBI:18420"/>
    </ligand>
</feature>
<feature type="binding site" evidence="1">
    <location>
        <position position="58"/>
    </location>
    <ligand>
        <name>Mg(2+)</name>
        <dbReference type="ChEBI" id="CHEBI:18420"/>
    </ligand>
</feature>
<proteinExistence type="inferred from homology"/>
<sequence>MAILGLGTDIVEIDRIEAVISRSGDRLAKRVLSANEWAQYQAHQQPVRFLAKRFAVKEAAAKAFGTGIRNGLAFNQFEVFNDELGKPKLRLWDEAERLAARMGVTSVHVTLADERHYACATVIIES</sequence>
<evidence type="ECO:0000255" key="1">
    <source>
        <dbReference type="HAMAP-Rule" id="MF_00101"/>
    </source>
</evidence>
<gene>
    <name evidence="1" type="primary">acpS</name>
    <name type="ordered locus">ESA_00696</name>
</gene>
<dbReference type="EC" id="2.7.8.7" evidence="1"/>
<dbReference type="EMBL" id="CP000783">
    <property type="protein sequence ID" value="ABU75974.1"/>
    <property type="molecule type" value="Genomic_DNA"/>
</dbReference>
<dbReference type="RefSeq" id="WP_004387384.1">
    <property type="nucleotide sequence ID" value="NC_009778.1"/>
</dbReference>
<dbReference type="SMR" id="A7MH03"/>
<dbReference type="GeneID" id="56729585"/>
<dbReference type="KEGG" id="esa:ESA_00696"/>
<dbReference type="HOGENOM" id="CLU_089696_3_1_6"/>
<dbReference type="Proteomes" id="UP000000260">
    <property type="component" value="Chromosome"/>
</dbReference>
<dbReference type="GO" id="GO:0005737">
    <property type="term" value="C:cytoplasm"/>
    <property type="evidence" value="ECO:0007669"/>
    <property type="project" value="UniProtKB-SubCell"/>
</dbReference>
<dbReference type="GO" id="GO:0008897">
    <property type="term" value="F:holo-[acyl-carrier-protein] synthase activity"/>
    <property type="evidence" value="ECO:0007669"/>
    <property type="project" value="UniProtKB-UniRule"/>
</dbReference>
<dbReference type="GO" id="GO:0000287">
    <property type="term" value="F:magnesium ion binding"/>
    <property type="evidence" value="ECO:0007669"/>
    <property type="project" value="UniProtKB-UniRule"/>
</dbReference>
<dbReference type="GO" id="GO:0006633">
    <property type="term" value="P:fatty acid biosynthetic process"/>
    <property type="evidence" value="ECO:0007669"/>
    <property type="project" value="UniProtKB-UniRule"/>
</dbReference>
<dbReference type="FunFam" id="3.90.470.20:FF:000001">
    <property type="entry name" value="Holo-[acyl-carrier-protein] synthase"/>
    <property type="match status" value="1"/>
</dbReference>
<dbReference type="Gene3D" id="3.90.470.20">
    <property type="entry name" value="4'-phosphopantetheinyl transferase domain"/>
    <property type="match status" value="1"/>
</dbReference>
<dbReference type="HAMAP" id="MF_00101">
    <property type="entry name" value="AcpS"/>
    <property type="match status" value="1"/>
</dbReference>
<dbReference type="InterPro" id="IPR008278">
    <property type="entry name" value="4-PPantetheinyl_Trfase_dom"/>
</dbReference>
<dbReference type="InterPro" id="IPR037143">
    <property type="entry name" value="4-PPantetheinyl_Trfase_dom_sf"/>
</dbReference>
<dbReference type="InterPro" id="IPR002582">
    <property type="entry name" value="ACPS"/>
</dbReference>
<dbReference type="InterPro" id="IPR004568">
    <property type="entry name" value="Ppantetheine-prot_Trfase_dom"/>
</dbReference>
<dbReference type="NCBIfam" id="TIGR00516">
    <property type="entry name" value="acpS"/>
    <property type="match status" value="1"/>
</dbReference>
<dbReference type="NCBIfam" id="TIGR00556">
    <property type="entry name" value="pantethn_trn"/>
    <property type="match status" value="1"/>
</dbReference>
<dbReference type="Pfam" id="PF01648">
    <property type="entry name" value="ACPS"/>
    <property type="match status" value="1"/>
</dbReference>
<dbReference type="SUPFAM" id="SSF56214">
    <property type="entry name" value="4'-phosphopantetheinyl transferase"/>
    <property type="match status" value="1"/>
</dbReference>
<keyword id="KW-0963">Cytoplasm</keyword>
<keyword id="KW-0275">Fatty acid biosynthesis</keyword>
<keyword id="KW-0276">Fatty acid metabolism</keyword>
<keyword id="KW-0444">Lipid biosynthesis</keyword>
<keyword id="KW-0443">Lipid metabolism</keyword>
<keyword id="KW-0460">Magnesium</keyword>
<keyword id="KW-0479">Metal-binding</keyword>
<keyword id="KW-1185">Reference proteome</keyword>
<keyword id="KW-0808">Transferase</keyword>
<comment type="function">
    <text evidence="1">Transfers the 4'-phosphopantetheine moiety from coenzyme A to a Ser of acyl-carrier-protein.</text>
</comment>
<comment type="catalytic activity">
    <reaction evidence="1">
        <text>apo-[ACP] + CoA = holo-[ACP] + adenosine 3',5'-bisphosphate + H(+)</text>
        <dbReference type="Rhea" id="RHEA:12068"/>
        <dbReference type="Rhea" id="RHEA-COMP:9685"/>
        <dbReference type="Rhea" id="RHEA-COMP:9690"/>
        <dbReference type="ChEBI" id="CHEBI:15378"/>
        <dbReference type="ChEBI" id="CHEBI:29999"/>
        <dbReference type="ChEBI" id="CHEBI:57287"/>
        <dbReference type="ChEBI" id="CHEBI:58343"/>
        <dbReference type="ChEBI" id="CHEBI:64479"/>
        <dbReference type="EC" id="2.7.8.7"/>
    </reaction>
</comment>
<comment type="cofactor">
    <cofactor evidence="1">
        <name>Mg(2+)</name>
        <dbReference type="ChEBI" id="CHEBI:18420"/>
    </cofactor>
</comment>
<comment type="subcellular location">
    <subcellularLocation>
        <location evidence="1">Cytoplasm</location>
    </subcellularLocation>
</comment>
<comment type="similarity">
    <text evidence="1">Belongs to the P-Pant transferase superfamily. AcpS family.</text>
</comment>
<reference key="1">
    <citation type="journal article" date="2010" name="PLoS ONE">
        <title>Genome sequence of Cronobacter sakazakii BAA-894 and comparative genomic hybridization analysis with other Cronobacter species.</title>
        <authorList>
            <person name="Kucerova E."/>
            <person name="Clifton S.W."/>
            <person name="Xia X.Q."/>
            <person name="Long F."/>
            <person name="Porwollik S."/>
            <person name="Fulton L."/>
            <person name="Fronick C."/>
            <person name="Minx P."/>
            <person name="Kyung K."/>
            <person name="Warren W."/>
            <person name="Fulton R."/>
            <person name="Feng D."/>
            <person name="Wollam A."/>
            <person name="Shah N."/>
            <person name="Bhonagiri V."/>
            <person name="Nash W.E."/>
            <person name="Hallsworth-Pepin K."/>
            <person name="Wilson R.K."/>
            <person name="McClelland M."/>
            <person name="Forsythe S.J."/>
        </authorList>
    </citation>
    <scope>NUCLEOTIDE SEQUENCE [LARGE SCALE GENOMIC DNA]</scope>
    <source>
        <strain>ATCC BAA-894</strain>
    </source>
</reference>
<protein>
    <recommendedName>
        <fullName evidence="1">Holo-[acyl-carrier-protein] synthase</fullName>
        <shortName evidence="1">Holo-ACP synthase</shortName>
        <ecNumber evidence="1">2.7.8.7</ecNumber>
    </recommendedName>
    <alternativeName>
        <fullName evidence="1">4'-phosphopantetheinyl transferase AcpS</fullName>
    </alternativeName>
</protein>
<organism>
    <name type="scientific">Cronobacter sakazakii (strain ATCC BAA-894)</name>
    <name type="common">Enterobacter sakazakii</name>
    <dbReference type="NCBI Taxonomy" id="290339"/>
    <lineage>
        <taxon>Bacteria</taxon>
        <taxon>Pseudomonadati</taxon>
        <taxon>Pseudomonadota</taxon>
        <taxon>Gammaproteobacteria</taxon>
        <taxon>Enterobacterales</taxon>
        <taxon>Enterobacteriaceae</taxon>
        <taxon>Cronobacter</taxon>
    </lineage>
</organism>
<name>ACPS_CROS8</name>